<name>DER_ACISJ</name>
<comment type="function">
    <text evidence="1">GTPase that plays an essential role in the late steps of ribosome biogenesis.</text>
</comment>
<comment type="subunit">
    <text evidence="1">Associates with the 50S ribosomal subunit.</text>
</comment>
<comment type="similarity">
    <text evidence="1">Belongs to the TRAFAC class TrmE-Era-EngA-EngB-Septin-like GTPase superfamily. EngA (Der) GTPase family.</text>
</comment>
<dbReference type="EMBL" id="CP000539">
    <property type="protein sequence ID" value="ABM41406.1"/>
    <property type="molecule type" value="Genomic_DNA"/>
</dbReference>
<dbReference type="SMR" id="A1W581"/>
<dbReference type="STRING" id="232721.Ajs_1174"/>
<dbReference type="KEGG" id="ajs:Ajs_1174"/>
<dbReference type="eggNOG" id="COG1160">
    <property type="taxonomic scope" value="Bacteria"/>
</dbReference>
<dbReference type="HOGENOM" id="CLU_016077_6_2_4"/>
<dbReference type="Proteomes" id="UP000000645">
    <property type="component" value="Chromosome"/>
</dbReference>
<dbReference type="GO" id="GO:0005525">
    <property type="term" value="F:GTP binding"/>
    <property type="evidence" value="ECO:0007669"/>
    <property type="project" value="UniProtKB-UniRule"/>
</dbReference>
<dbReference type="GO" id="GO:0043022">
    <property type="term" value="F:ribosome binding"/>
    <property type="evidence" value="ECO:0007669"/>
    <property type="project" value="TreeGrafter"/>
</dbReference>
<dbReference type="GO" id="GO:0042254">
    <property type="term" value="P:ribosome biogenesis"/>
    <property type="evidence" value="ECO:0007669"/>
    <property type="project" value="UniProtKB-KW"/>
</dbReference>
<dbReference type="CDD" id="cd01894">
    <property type="entry name" value="EngA1"/>
    <property type="match status" value="1"/>
</dbReference>
<dbReference type="CDD" id="cd01895">
    <property type="entry name" value="EngA2"/>
    <property type="match status" value="1"/>
</dbReference>
<dbReference type="FunFam" id="3.30.300.20:FF:000004">
    <property type="entry name" value="GTPase Der"/>
    <property type="match status" value="1"/>
</dbReference>
<dbReference type="FunFam" id="3.40.50.300:FF:000040">
    <property type="entry name" value="GTPase Der"/>
    <property type="match status" value="1"/>
</dbReference>
<dbReference type="FunFam" id="3.40.50.300:FF:000057">
    <property type="entry name" value="GTPase Der"/>
    <property type="match status" value="1"/>
</dbReference>
<dbReference type="Gene3D" id="3.30.300.20">
    <property type="match status" value="1"/>
</dbReference>
<dbReference type="Gene3D" id="3.40.50.300">
    <property type="entry name" value="P-loop containing nucleotide triphosphate hydrolases"/>
    <property type="match status" value="2"/>
</dbReference>
<dbReference type="HAMAP" id="MF_00195">
    <property type="entry name" value="GTPase_Der"/>
    <property type="match status" value="1"/>
</dbReference>
<dbReference type="InterPro" id="IPR031166">
    <property type="entry name" value="G_ENGA"/>
</dbReference>
<dbReference type="InterPro" id="IPR006073">
    <property type="entry name" value="GTP-bd"/>
</dbReference>
<dbReference type="InterPro" id="IPR016484">
    <property type="entry name" value="GTPase_Der"/>
</dbReference>
<dbReference type="InterPro" id="IPR032859">
    <property type="entry name" value="KH_dom-like"/>
</dbReference>
<dbReference type="InterPro" id="IPR015946">
    <property type="entry name" value="KH_dom-like_a/b"/>
</dbReference>
<dbReference type="InterPro" id="IPR027417">
    <property type="entry name" value="P-loop_NTPase"/>
</dbReference>
<dbReference type="InterPro" id="IPR005225">
    <property type="entry name" value="Small_GTP-bd"/>
</dbReference>
<dbReference type="NCBIfam" id="TIGR03594">
    <property type="entry name" value="GTPase_EngA"/>
    <property type="match status" value="1"/>
</dbReference>
<dbReference type="NCBIfam" id="TIGR00231">
    <property type="entry name" value="small_GTP"/>
    <property type="match status" value="2"/>
</dbReference>
<dbReference type="PANTHER" id="PTHR43834">
    <property type="entry name" value="GTPASE DER"/>
    <property type="match status" value="1"/>
</dbReference>
<dbReference type="PANTHER" id="PTHR43834:SF6">
    <property type="entry name" value="GTPASE DER"/>
    <property type="match status" value="1"/>
</dbReference>
<dbReference type="Pfam" id="PF14714">
    <property type="entry name" value="KH_dom-like"/>
    <property type="match status" value="1"/>
</dbReference>
<dbReference type="Pfam" id="PF01926">
    <property type="entry name" value="MMR_HSR1"/>
    <property type="match status" value="2"/>
</dbReference>
<dbReference type="PIRSF" id="PIRSF006485">
    <property type="entry name" value="GTP-binding_EngA"/>
    <property type="match status" value="1"/>
</dbReference>
<dbReference type="PRINTS" id="PR00326">
    <property type="entry name" value="GTP1OBG"/>
</dbReference>
<dbReference type="SUPFAM" id="SSF52540">
    <property type="entry name" value="P-loop containing nucleoside triphosphate hydrolases"/>
    <property type="match status" value="2"/>
</dbReference>
<dbReference type="PROSITE" id="PS51712">
    <property type="entry name" value="G_ENGA"/>
    <property type="match status" value="2"/>
</dbReference>
<evidence type="ECO:0000255" key="1">
    <source>
        <dbReference type="HAMAP-Rule" id="MF_00195"/>
    </source>
</evidence>
<reference key="1">
    <citation type="submission" date="2006-12" db="EMBL/GenBank/DDBJ databases">
        <title>Complete sequence of chromosome 1 of Acidovorax sp. JS42.</title>
        <authorList>
            <person name="Copeland A."/>
            <person name="Lucas S."/>
            <person name="Lapidus A."/>
            <person name="Barry K."/>
            <person name="Detter J.C."/>
            <person name="Glavina del Rio T."/>
            <person name="Dalin E."/>
            <person name="Tice H."/>
            <person name="Pitluck S."/>
            <person name="Chertkov O."/>
            <person name="Brettin T."/>
            <person name="Bruce D."/>
            <person name="Han C."/>
            <person name="Tapia R."/>
            <person name="Gilna P."/>
            <person name="Schmutz J."/>
            <person name="Larimer F."/>
            <person name="Land M."/>
            <person name="Hauser L."/>
            <person name="Kyrpides N."/>
            <person name="Kim E."/>
            <person name="Stahl D."/>
            <person name="Richardson P."/>
        </authorList>
    </citation>
    <scope>NUCLEOTIDE SEQUENCE [LARGE SCALE GENOMIC DNA]</scope>
    <source>
        <strain>JS42</strain>
    </source>
</reference>
<accession>A1W581</accession>
<organism>
    <name type="scientific">Acidovorax sp. (strain JS42)</name>
    <dbReference type="NCBI Taxonomy" id="232721"/>
    <lineage>
        <taxon>Bacteria</taxon>
        <taxon>Pseudomonadati</taxon>
        <taxon>Pseudomonadota</taxon>
        <taxon>Betaproteobacteria</taxon>
        <taxon>Burkholderiales</taxon>
        <taxon>Comamonadaceae</taxon>
        <taxon>Acidovorax</taxon>
    </lineage>
</organism>
<keyword id="KW-0342">GTP-binding</keyword>
<keyword id="KW-0547">Nucleotide-binding</keyword>
<keyword id="KW-0677">Repeat</keyword>
<keyword id="KW-0690">Ribosome biogenesis</keyword>
<protein>
    <recommendedName>
        <fullName evidence="1">GTPase Der</fullName>
    </recommendedName>
    <alternativeName>
        <fullName evidence="1">GTP-binding protein EngA</fullName>
    </alternativeName>
</protein>
<feature type="chain" id="PRO_1000011550" description="GTPase Der">
    <location>
        <begin position="1"/>
        <end position="447"/>
    </location>
</feature>
<feature type="domain" description="EngA-type G 1">
    <location>
        <begin position="3"/>
        <end position="167"/>
    </location>
</feature>
<feature type="domain" description="EngA-type G 2">
    <location>
        <begin position="180"/>
        <end position="353"/>
    </location>
</feature>
<feature type="domain" description="KH-like" evidence="1">
    <location>
        <begin position="354"/>
        <end position="438"/>
    </location>
</feature>
<feature type="binding site" evidence="1">
    <location>
        <begin position="9"/>
        <end position="16"/>
    </location>
    <ligand>
        <name>GTP</name>
        <dbReference type="ChEBI" id="CHEBI:37565"/>
        <label>1</label>
    </ligand>
</feature>
<feature type="binding site" evidence="1">
    <location>
        <begin position="56"/>
        <end position="60"/>
    </location>
    <ligand>
        <name>GTP</name>
        <dbReference type="ChEBI" id="CHEBI:37565"/>
        <label>1</label>
    </ligand>
</feature>
<feature type="binding site" evidence="1">
    <location>
        <begin position="119"/>
        <end position="122"/>
    </location>
    <ligand>
        <name>GTP</name>
        <dbReference type="ChEBI" id="CHEBI:37565"/>
        <label>1</label>
    </ligand>
</feature>
<feature type="binding site" evidence="1">
    <location>
        <begin position="186"/>
        <end position="193"/>
    </location>
    <ligand>
        <name>GTP</name>
        <dbReference type="ChEBI" id="CHEBI:37565"/>
        <label>2</label>
    </ligand>
</feature>
<feature type="binding site" evidence="1">
    <location>
        <begin position="233"/>
        <end position="237"/>
    </location>
    <ligand>
        <name>GTP</name>
        <dbReference type="ChEBI" id="CHEBI:37565"/>
        <label>2</label>
    </ligand>
</feature>
<feature type="binding site" evidence="1">
    <location>
        <begin position="298"/>
        <end position="301"/>
    </location>
    <ligand>
        <name>GTP</name>
        <dbReference type="ChEBI" id="CHEBI:37565"/>
        <label>2</label>
    </ligand>
</feature>
<sequence length="447" mass="49405">MKPVIALVGRPNVGKSTLFNRLTKSRDAIVADFAGLTRDRHYGNGRQGKHEYIVIDTGGFEPDASSGIYREMARQTQQAVAEADVVVFVVDVRGGLSAQDHDIANYLRRLGKPCVLAGNKAEGMQDSMHLAEFYELGLGEVHPVSAAHGQGVRSLVDLALKPLALPEIEEEDAAAEKNVIRLAVAGRPNVGKSTLINTWLGEERLVAFDMPGTTRDAISVPFERNGQKFELIDTAGLRRKGKVFEAIEKFSVVKTLQAIESANVVLLLLDATQGVTDQDAHIAGYILESGRAVVIAVNKWDAVDDYGRQQLERSIETCLSFLKFAPLHFISAKKRQGIGPLWSSIIQAYKSANRKMPTPVLTRLLQEAVQFQSPKRSGMFRPKMRYAHQGGMNPPVIVIHGNSLEHVTDAYKRFLEARFRKEFDLVGTPLRIEMKTSSNPYTDKQNS</sequence>
<gene>
    <name evidence="1" type="primary">der</name>
    <name type="synonym">engA</name>
    <name type="ordered locus">Ajs_1174</name>
</gene>
<proteinExistence type="inferred from homology"/>